<accession>A0A2R2Z570</accession>
<comment type="function">
    <text evidence="4">Secreted effector that contributes strongly to virulence during infection by P.capsici (PubMed:29572661). Induces cell death in the Solanaceae, including hot pepper (PubMed:29572661).</text>
</comment>
<comment type="subcellular location">
    <subcellularLocation>
        <location evidence="7">Secreted</location>
    </subcellularLocation>
</comment>
<comment type="domain">
    <text evidence="7">Key residues/motif important for the effector activities are degenerated in most NLPs, including the nlp24 peptide consisting of the conserved region I (11-aa immunogenic part) and conserved region II (the heptapeptide GHRHDWE motif) that is important for phytotoxic activity.</text>
</comment>
<comment type="similarity">
    <text evidence="6">Belongs to the Necrosis inducing protein (NPP1) family.</text>
</comment>
<dbReference type="EMBL" id="MF135589">
    <property type="protein sequence ID" value="AUD40035.1"/>
    <property type="molecule type" value="mRNA"/>
</dbReference>
<dbReference type="SMR" id="A0A2R2Z570"/>
<dbReference type="VEuPathDB" id="FungiDB:DVH05_025042"/>
<dbReference type="PHI-base" id="PHI:8056"/>
<dbReference type="GO" id="GO:0005576">
    <property type="term" value="C:extracellular region"/>
    <property type="evidence" value="ECO:0007669"/>
    <property type="project" value="UniProtKB-SubCell"/>
</dbReference>
<dbReference type="InterPro" id="IPR008701">
    <property type="entry name" value="NPP1"/>
</dbReference>
<dbReference type="PANTHER" id="PTHR33657">
    <property type="entry name" value="DOMAIN PROTEIN, PUTATIVE (AFU_ORTHOLOGUE AFUA_5G00600)-RELATED"/>
    <property type="match status" value="1"/>
</dbReference>
<dbReference type="PANTHER" id="PTHR33657:SF8">
    <property type="entry name" value="DOMAIN PROTEIN, PUTATIVE (AFU_ORTHOLOGUE AFUA_5G00600)-RELATED"/>
    <property type="match status" value="1"/>
</dbReference>
<dbReference type="Pfam" id="PF05630">
    <property type="entry name" value="NPP1"/>
    <property type="match status" value="1"/>
</dbReference>
<dbReference type="PIRSF" id="PIRSF029958">
    <property type="entry name" value="Necrosis-inducing_protein"/>
    <property type="match status" value="1"/>
</dbReference>
<protein>
    <recommendedName>
        <fullName evidence="5">NLP effector protein Pc109174</fullName>
    </recommendedName>
    <alternativeName>
        <fullName evidence="5">Necrosis-inducing Pc109174</fullName>
    </alternativeName>
    <alternativeName>
        <fullName evidence="5">Nep1-like protein Pc109174</fullName>
    </alternativeName>
</protein>
<keyword id="KW-0325">Glycoprotein</keyword>
<keyword id="KW-0964">Secreted</keyword>
<keyword id="KW-0732">Signal</keyword>
<keyword id="KW-0843">Virulence</keyword>
<gene>
    <name evidence="5" type="ORF">Pc109174</name>
</gene>
<name>NLP74_PHYCP</name>
<reference key="1">
    <citation type="submission" date="2017-05" db="EMBL/GenBank/DDBJ databases">
        <authorList>
            <person name="Song R."/>
            <person name="Chenine A.L."/>
            <person name="Ruprecht R.M."/>
        </authorList>
    </citation>
    <scope>NUCLEOTIDE SEQUENCE [MRNA]</scope>
    <source>
        <strain>Pc537</strain>
    </source>
</reference>
<reference key="2">
    <citation type="journal article" date="2018" name="Mol. Genet. Genomics">
        <title>Identification and functional analysis of the NLP-encoding genes from the phytopathogenic oomycete Phytophthora capsici.</title>
        <authorList>
            <person name="Chen X.R."/>
            <person name="Huang S.X."/>
            <person name="Zhang Y."/>
            <person name="Sheng G.L."/>
            <person name="Li Y.P."/>
            <person name="Zhu F."/>
        </authorList>
    </citation>
    <scope>NUCLEOTIDE SEQUENCE [MRNA]</scope>
    <scope>FUNCTION</scope>
    <scope>DOMAIN</scope>
    <source>
        <strain>Pc537</strain>
    </source>
</reference>
<proteinExistence type="evidence at transcript level"/>
<organism>
    <name type="scientific">Phytophthora capsici</name>
    <dbReference type="NCBI Taxonomy" id="4784"/>
    <lineage>
        <taxon>Eukaryota</taxon>
        <taxon>Sar</taxon>
        <taxon>Stramenopiles</taxon>
        <taxon>Oomycota</taxon>
        <taxon>Peronosporales</taxon>
        <taxon>Peronosporaceae</taxon>
        <taxon>Phytophthora</taxon>
    </lineage>
</organism>
<feature type="signal peptide" evidence="2">
    <location>
        <begin position="1"/>
        <end position="19"/>
    </location>
</feature>
<feature type="chain" id="PRO_5015321287" description="NLP effector protein Pc109174">
    <location>
        <begin position="20"/>
        <end position="277"/>
    </location>
</feature>
<feature type="short sequence motif" description="Hepta-peptide GHRHDWE motif" evidence="1">
    <location>
        <begin position="119"/>
        <end position="125"/>
    </location>
</feature>
<feature type="glycosylation site" description="N-linked (GlcNAc...) asparagine" evidence="3">
    <location>
        <position position="199"/>
    </location>
</feature>
<evidence type="ECO:0000250" key="1">
    <source>
        <dbReference type="UniProtKB" id="L7NCS1"/>
    </source>
</evidence>
<evidence type="ECO:0000255" key="2"/>
<evidence type="ECO:0000255" key="3">
    <source>
        <dbReference type="PROSITE-ProRule" id="PRU00498"/>
    </source>
</evidence>
<evidence type="ECO:0000269" key="4">
    <source>
    </source>
</evidence>
<evidence type="ECO:0000303" key="5">
    <source>
    </source>
</evidence>
<evidence type="ECO:0000305" key="6"/>
<evidence type="ECO:0000305" key="7">
    <source>
    </source>
</evidence>
<sequence length="277" mass="30368">MNLVPALVLLLALAQTVLGATIGHDKVQPFAQPDPVTVSEKAAVKYKPQLQISDSCVSFPAVNAAGEITGGLKGTKGTDGCTEAPLGSQVYGRSTWYQDKWAMMFAWYFPKNFWGGGAKSRHLWANMVLWIDNPALETPKILGASLSRQTLEVPKAVFLSMGEQQKDPYSKVTAIPPMGFVGMQAIQTSRISRFRYTYNYTGGSDISTRVSQGYPDNSAWISLTFAGTDGEYQDLIMWNQLTDQARAALESADFGEDTKVPFNDKNFEAALAQAWPF</sequence>